<protein>
    <recommendedName>
        <fullName evidence="1">Probable phosphoglycerate mutase GpmB</fullName>
        <ecNumber evidence="1">5.4.2.-</ecNumber>
    </recommendedName>
    <alternativeName>
        <fullName evidence="1">PGAM</fullName>
    </alternativeName>
    <alternativeName>
        <fullName evidence="1">Phosphoglyceromutase</fullName>
    </alternativeName>
</protein>
<feature type="chain" id="PRO_1000064139" description="Probable phosphoglycerate mutase GpmB">
    <location>
        <begin position="1"/>
        <end position="215"/>
    </location>
</feature>
<feature type="active site" description="Tele-phosphohistidine intermediate" evidence="1">
    <location>
        <position position="9"/>
    </location>
</feature>
<feature type="active site" description="Proton donor/acceptor" evidence="1">
    <location>
        <position position="82"/>
    </location>
</feature>
<feature type="binding site" evidence="1">
    <location>
        <begin position="8"/>
        <end position="15"/>
    </location>
    <ligand>
        <name>substrate</name>
    </ligand>
</feature>
<feature type="binding site" evidence="1">
    <location>
        <begin position="21"/>
        <end position="22"/>
    </location>
    <ligand>
        <name>substrate</name>
    </ligand>
</feature>
<feature type="binding site" evidence="1">
    <location>
        <position position="58"/>
    </location>
    <ligand>
        <name>substrate</name>
    </ligand>
</feature>
<feature type="binding site" evidence="1">
    <location>
        <begin position="82"/>
        <end position="85"/>
    </location>
    <ligand>
        <name>substrate</name>
    </ligand>
</feature>
<feature type="binding site" evidence="1">
    <location>
        <begin position="151"/>
        <end position="152"/>
    </location>
    <ligand>
        <name>substrate</name>
    </ligand>
</feature>
<feature type="site" description="Transition state stabilizer" evidence="1">
    <location>
        <position position="150"/>
    </location>
</feature>
<dbReference type="EC" id="5.4.2.-" evidence="1"/>
<dbReference type="EMBL" id="BX936398">
    <property type="protein sequence ID" value="CAH19838.1"/>
    <property type="molecule type" value="Genomic_DNA"/>
</dbReference>
<dbReference type="RefSeq" id="WP_002209230.1">
    <property type="nucleotide sequence ID" value="NZ_CP009712.1"/>
</dbReference>
<dbReference type="SMR" id="Q66EU3"/>
<dbReference type="GeneID" id="57974154"/>
<dbReference type="KEGG" id="ypo:BZ17_1960"/>
<dbReference type="KEGG" id="yps:YPTB0598"/>
<dbReference type="PATRIC" id="fig|273123.14.peg.2087"/>
<dbReference type="UniPathway" id="UPA00109">
    <property type="reaction ID" value="UER00186"/>
</dbReference>
<dbReference type="Proteomes" id="UP000001011">
    <property type="component" value="Chromosome"/>
</dbReference>
<dbReference type="GO" id="GO:0005737">
    <property type="term" value="C:cytoplasm"/>
    <property type="evidence" value="ECO:0007669"/>
    <property type="project" value="TreeGrafter"/>
</dbReference>
<dbReference type="GO" id="GO:0016791">
    <property type="term" value="F:phosphatase activity"/>
    <property type="evidence" value="ECO:0007669"/>
    <property type="project" value="TreeGrafter"/>
</dbReference>
<dbReference type="GO" id="GO:0004619">
    <property type="term" value="F:phosphoglycerate mutase activity"/>
    <property type="evidence" value="ECO:0007669"/>
    <property type="project" value="UniProtKB-UniRule"/>
</dbReference>
<dbReference type="GO" id="GO:0006096">
    <property type="term" value="P:glycolytic process"/>
    <property type="evidence" value="ECO:0007669"/>
    <property type="project" value="UniProtKB-UniRule"/>
</dbReference>
<dbReference type="CDD" id="cd07067">
    <property type="entry name" value="HP_PGM_like"/>
    <property type="match status" value="1"/>
</dbReference>
<dbReference type="Gene3D" id="3.40.50.1240">
    <property type="entry name" value="Phosphoglycerate mutase-like"/>
    <property type="match status" value="1"/>
</dbReference>
<dbReference type="HAMAP" id="MF_01040">
    <property type="entry name" value="PGAM_GpmB"/>
    <property type="match status" value="1"/>
</dbReference>
<dbReference type="InterPro" id="IPR013078">
    <property type="entry name" value="His_Pase_superF_clade-1"/>
</dbReference>
<dbReference type="InterPro" id="IPR029033">
    <property type="entry name" value="His_PPase_superfam"/>
</dbReference>
<dbReference type="InterPro" id="IPR001345">
    <property type="entry name" value="PG/BPGM_mutase_AS"/>
</dbReference>
<dbReference type="InterPro" id="IPR050275">
    <property type="entry name" value="PGM_Phosphatase"/>
</dbReference>
<dbReference type="InterPro" id="IPR023086">
    <property type="entry name" value="Phosphoglycerate_mutase_GpmB"/>
</dbReference>
<dbReference type="NCBIfam" id="NF002901">
    <property type="entry name" value="PRK03482.1"/>
    <property type="match status" value="1"/>
</dbReference>
<dbReference type="PANTHER" id="PTHR48100">
    <property type="entry name" value="BROAD-SPECIFICITY PHOSPHATASE YOR283W-RELATED"/>
    <property type="match status" value="1"/>
</dbReference>
<dbReference type="PANTHER" id="PTHR48100:SF1">
    <property type="entry name" value="HISTIDINE PHOSPHATASE FAMILY PROTEIN-RELATED"/>
    <property type="match status" value="1"/>
</dbReference>
<dbReference type="Pfam" id="PF00300">
    <property type="entry name" value="His_Phos_1"/>
    <property type="match status" value="1"/>
</dbReference>
<dbReference type="SMART" id="SM00855">
    <property type="entry name" value="PGAM"/>
    <property type="match status" value="1"/>
</dbReference>
<dbReference type="SUPFAM" id="SSF53254">
    <property type="entry name" value="Phosphoglycerate mutase-like"/>
    <property type="match status" value="1"/>
</dbReference>
<dbReference type="PROSITE" id="PS00175">
    <property type="entry name" value="PG_MUTASE"/>
    <property type="match status" value="1"/>
</dbReference>
<comment type="catalytic activity">
    <reaction evidence="1">
        <text>(2R)-2-phosphoglycerate = (2R)-3-phosphoglycerate</text>
        <dbReference type="Rhea" id="RHEA:15901"/>
        <dbReference type="ChEBI" id="CHEBI:58272"/>
        <dbReference type="ChEBI" id="CHEBI:58289"/>
    </reaction>
</comment>
<comment type="pathway">
    <text evidence="1">Carbohydrate degradation; glycolysis; pyruvate from D-glyceraldehyde 3-phosphate: step 3/5.</text>
</comment>
<comment type="similarity">
    <text evidence="1">Belongs to the phosphoglycerate mutase family. GpmB subfamily.</text>
</comment>
<evidence type="ECO:0000255" key="1">
    <source>
        <dbReference type="HAMAP-Rule" id="MF_01040"/>
    </source>
</evidence>
<name>GPMB_YERPS</name>
<organism>
    <name type="scientific">Yersinia pseudotuberculosis serotype I (strain IP32953)</name>
    <dbReference type="NCBI Taxonomy" id="273123"/>
    <lineage>
        <taxon>Bacteria</taxon>
        <taxon>Pseudomonadati</taxon>
        <taxon>Pseudomonadota</taxon>
        <taxon>Gammaproteobacteria</taxon>
        <taxon>Enterobacterales</taxon>
        <taxon>Yersiniaceae</taxon>
        <taxon>Yersinia</taxon>
    </lineage>
</organism>
<keyword id="KW-0324">Glycolysis</keyword>
<keyword id="KW-0413">Isomerase</keyword>
<proteinExistence type="inferred from homology"/>
<gene>
    <name evidence="1" type="primary">gpmB</name>
    <name type="ordered locus">YPTB0598</name>
</gene>
<sequence>MLQVYLVRHGETLWNAARRIQGQSDSPLTEIGIRQAHLVAQRVRNQGITHIISSDLGRTQQTAKIIADACGLTMVTDPRLRELNMGVLENRPIDSLTPEEEQWRKQMVNGTEGARIPEGESMTELGRRMHAALDSCLELPAGSKPLLVSHGMALGCLLSTLLGLPAHAERRLRLRNCSLSRVDYQESPWLASGWVIESAGDTAHLDMPALDELQR</sequence>
<accession>Q66EU3</accession>
<reference key="1">
    <citation type="journal article" date="2004" name="Proc. Natl. Acad. Sci. U.S.A.">
        <title>Insights into the evolution of Yersinia pestis through whole-genome comparison with Yersinia pseudotuberculosis.</title>
        <authorList>
            <person name="Chain P.S.G."/>
            <person name="Carniel E."/>
            <person name="Larimer F.W."/>
            <person name="Lamerdin J."/>
            <person name="Stoutland P.O."/>
            <person name="Regala W.M."/>
            <person name="Georgescu A.M."/>
            <person name="Vergez L.M."/>
            <person name="Land M.L."/>
            <person name="Motin V.L."/>
            <person name="Brubaker R.R."/>
            <person name="Fowler J."/>
            <person name="Hinnebusch J."/>
            <person name="Marceau M."/>
            <person name="Medigue C."/>
            <person name="Simonet M."/>
            <person name="Chenal-Francisque V."/>
            <person name="Souza B."/>
            <person name="Dacheux D."/>
            <person name="Elliott J.M."/>
            <person name="Derbise A."/>
            <person name="Hauser L.J."/>
            <person name="Garcia E."/>
        </authorList>
    </citation>
    <scope>NUCLEOTIDE SEQUENCE [LARGE SCALE GENOMIC DNA]</scope>
    <source>
        <strain>IP32953</strain>
    </source>
</reference>